<name>FADA_BACSU</name>
<reference key="1">
    <citation type="journal article" date="1997" name="Nature">
        <title>The complete genome sequence of the Gram-positive bacterium Bacillus subtilis.</title>
        <authorList>
            <person name="Kunst F."/>
            <person name="Ogasawara N."/>
            <person name="Moszer I."/>
            <person name="Albertini A.M."/>
            <person name="Alloni G."/>
            <person name="Azevedo V."/>
            <person name="Bertero M.G."/>
            <person name="Bessieres P."/>
            <person name="Bolotin A."/>
            <person name="Borchert S."/>
            <person name="Borriss R."/>
            <person name="Boursier L."/>
            <person name="Brans A."/>
            <person name="Braun M."/>
            <person name="Brignell S.C."/>
            <person name="Bron S."/>
            <person name="Brouillet S."/>
            <person name="Bruschi C.V."/>
            <person name="Caldwell B."/>
            <person name="Capuano V."/>
            <person name="Carter N.M."/>
            <person name="Choi S.-K."/>
            <person name="Codani J.-J."/>
            <person name="Connerton I.F."/>
            <person name="Cummings N.J."/>
            <person name="Daniel R.A."/>
            <person name="Denizot F."/>
            <person name="Devine K.M."/>
            <person name="Duesterhoeft A."/>
            <person name="Ehrlich S.D."/>
            <person name="Emmerson P.T."/>
            <person name="Entian K.-D."/>
            <person name="Errington J."/>
            <person name="Fabret C."/>
            <person name="Ferrari E."/>
            <person name="Foulger D."/>
            <person name="Fritz C."/>
            <person name="Fujita M."/>
            <person name="Fujita Y."/>
            <person name="Fuma S."/>
            <person name="Galizzi A."/>
            <person name="Galleron N."/>
            <person name="Ghim S.-Y."/>
            <person name="Glaser P."/>
            <person name="Goffeau A."/>
            <person name="Golightly E.J."/>
            <person name="Grandi G."/>
            <person name="Guiseppi G."/>
            <person name="Guy B.J."/>
            <person name="Haga K."/>
            <person name="Haiech J."/>
            <person name="Harwood C.R."/>
            <person name="Henaut A."/>
            <person name="Hilbert H."/>
            <person name="Holsappel S."/>
            <person name="Hosono S."/>
            <person name="Hullo M.-F."/>
            <person name="Itaya M."/>
            <person name="Jones L.-M."/>
            <person name="Joris B."/>
            <person name="Karamata D."/>
            <person name="Kasahara Y."/>
            <person name="Klaerr-Blanchard M."/>
            <person name="Klein C."/>
            <person name="Kobayashi Y."/>
            <person name="Koetter P."/>
            <person name="Koningstein G."/>
            <person name="Krogh S."/>
            <person name="Kumano M."/>
            <person name="Kurita K."/>
            <person name="Lapidus A."/>
            <person name="Lardinois S."/>
            <person name="Lauber J."/>
            <person name="Lazarevic V."/>
            <person name="Lee S.-M."/>
            <person name="Levine A."/>
            <person name="Liu H."/>
            <person name="Masuda S."/>
            <person name="Mauel C."/>
            <person name="Medigue C."/>
            <person name="Medina N."/>
            <person name="Mellado R.P."/>
            <person name="Mizuno M."/>
            <person name="Moestl D."/>
            <person name="Nakai S."/>
            <person name="Noback M."/>
            <person name="Noone D."/>
            <person name="O'Reilly M."/>
            <person name="Ogawa K."/>
            <person name="Ogiwara A."/>
            <person name="Oudega B."/>
            <person name="Park S.-H."/>
            <person name="Parro V."/>
            <person name="Pohl T.M."/>
            <person name="Portetelle D."/>
            <person name="Porwollik S."/>
            <person name="Prescott A.M."/>
            <person name="Presecan E."/>
            <person name="Pujic P."/>
            <person name="Purnelle B."/>
            <person name="Rapoport G."/>
            <person name="Rey M."/>
            <person name="Reynolds S."/>
            <person name="Rieger M."/>
            <person name="Rivolta C."/>
            <person name="Rocha E."/>
            <person name="Roche B."/>
            <person name="Rose M."/>
            <person name="Sadaie Y."/>
            <person name="Sato T."/>
            <person name="Scanlan E."/>
            <person name="Schleich S."/>
            <person name="Schroeter R."/>
            <person name="Scoffone F."/>
            <person name="Sekiguchi J."/>
            <person name="Sekowska A."/>
            <person name="Seror S.J."/>
            <person name="Serror P."/>
            <person name="Shin B.-S."/>
            <person name="Soldo B."/>
            <person name="Sorokin A."/>
            <person name="Tacconi E."/>
            <person name="Takagi T."/>
            <person name="Takahashi H."/>
            <person name="Takemaru K."/>
            <person name="Takeuchi M."/>
            <person name="Tamakoshi A."/>
            <person name="Tanaka T."/>
            <person name="Terpstra P."/>
            <person name="Tognoni A."/>
            <person name="Tosato V."/>
            <person name="Uchiyama S."/>
            <person name="Vandenbol M."/>
            <person name="Vannier F."/>
            <person name="Vassarotti A."/>
            <person name="Viari A."/>
            <person name="Wambutt R."/>
            <person name="Wedler E."/>
            <person name="Wedler H."/>
            <person name="Weitzenegger T."/>
            <person name="Winters P."/>
            <person name="Wipat A."/>
            <person name="Yamamoto H."/>
            <person name="Yamane K."/>
            <person name="Yasumoto K."/>
            <person name="Yata K."/>
            <person name="Yoshida K."/>
            <person name="Yoshikawa H.-F."/>
            <person name="Zumstein E."/>
            <person name="Yoshikawa H."/>
            <person name="Danchin A."/>
        </authorList>
    </citation>
    <scope>NUCLEOTIDE SEQUENCE [LARGE SCALE GENOMIC DNA]</scope>
    <source>
        <strain>168</strain>
    </source>
</reference>
<reference key="2">
    <citation type="journal article" date="2007" name="J. Biol. Chem.">
        <title>Organization and function of the YsiA regulon of Bacillus subtilis involved in fatty acid degradation.</title>
        <authorList>
            <person name="Matsuoka H."/>
            <person name="Hirooka K."/>
            <person name="Fujita Y."/>
        </authorList>
    </citation>
    <scope>GENE NAME</scope>
    <scope>INDUCTION</scope>
    <source>
        <strain>168</strain>
    </source>
</reference>
<gene>
    <name type="primary">fadA</name>
    <name type="synonym">yusK</name>
    <name type="ordered locus">BSU32830</name>
</gene>
<keyword id="KW-0012">Acyltransferase</keyword>
<keyword id="KW-0276">Fatty acid metabolism</keyword>
<keyword id="KW-0442">Lipid degradation</keyword>
<keyword id="KW-0443">Lipid metabolism</keyword>
<keyword id="KW-1185">Reference proteome</keyword>
<keyword id="KW-0808">Transferase</keyword>
<evidence type="ECO:0000250" key="1"/>
<evidence type="ECO:0000255" key="2">
    <source>
        <dbReference type="PROSITE-ProRule" id="PRU10020"/>
    </source>
</evidence>
<evidence type="ECO:0000269" key="3">
    <source>
    </source>
</evidence>
<evidence type="ECO:0000305" key="4"/>
<sequence length="391" mass="41123">MKEAVIVSGARTPVGKAKKGSLATVRPDDLGAICVKETLKRAGGYEGNIDDLIIGCATPEAEQGLNMARNIGALAGLPYTVPAITVNRYCSSGLQSIAYAAEKIMLGAYDTAIAGGAESMSQVPMMGHVTRPNLALAEKAPEYYMSMGHTAEQVAKKYGVSREDQDAFAVRSHQNAAKALAEGKFKDEIVPVEVTVTEIGEDHKPMEKQFVFSQDEGVRPQTTADILSTLRPAFSVDGTVTAGNSSQTSDGAAAVMLMDREKADALGLAPLVKFRSFAVGGVPPEVMGIGPVEAIPRALKLAGLQLQDIGLFELNEAFASQAIQVIRELGIDEEKVNVNGGAIALGHPLGCTGTKLTLSLIHEMKRRNEQFGVVTMCIGGGMGAAGVFELC</sequence>
<dbReference type="EC" id="2.3.1.16"/>
<dbReference type="EMBL" id="AL009126">
    <property type="protein sequence ID" value="CAB15272.1"/>
    <property type="molecule type" value="Genomic_DNA"/>
</dbReference>
<dbReference type="PIR" id="D70021">
    <property type="entry name" value="D70021"/>
</dbReference>
<dbReference type="RefSeq" id="NP_391162.1">
    <property type="nucleotide sequence ID" value="NC_000964.3"/>
</dbReference>
<dbReference type="RefSeq" id="WP_003228574.1">
    <property type="nucleotide sequence ID" value="NZ_OZ025638.1"/>
</dbReference>
<dbReference type="SMR" id="O32177"/>
<dbReference type="FunCoup" id="O32177">
    <property type="interactions" value="430"/>
</dbReference>
<dbReference type="STRING" id="224308.BSU32830"/>
<dbReference type="PaxDb" id="224308-BSU32830"/>
<dbReference type="EnsemblBacteria" id="CAB15272">
    <property type="protein sequence ID" value="CAB15272"/>
    <property type="gene ID" value="BSU_32830"/>
</dbReference>
<dbReference type="GeneID" id="936729"/>
<dbReference type="KEGG" id="bsu:BSU32830"/>
<dbReference type="PATRIC" id="fig|224308.179.peg.3557"/>
<dbReference type="eggNOG" id="COG0183">
    <property type="taxonomic scope" value="Bacteria"/>
</dbReference>
<dbReference type="InParanoid" id="O32177"/>
<dbReference type="OrthoDB" id="9764892at2"/>
<dbReference type="PhylomeDB" id="O32177"/>
<dbReference type="BioCyc" id="BSUB:BSU32830-MONOMER"/>
<dbReference type="UniPathway" id="UPA00659"/>
<dbReference type="Proteomes" id="UP000001570">
    <property type="component" value="Chromosome"/>
</dbReference>
<dbReference type="GO" id="GO:0005737">
    <property type="term" value="C:cytoplasm"/>
    <property type="evidence" value="ECO:0007669"/>
    <property type="project" value="UniProtKB-ARBA"/>
</dbReference>
<dbReference type="GO" id="GO:0003988">
    <property type="term" value="F:acetyl-CoA C-acyltransferase activity"/>
    <property type="evidence" value="ECO:0000318"/>
    <property type="project" value="GO_Central"/>
</dbReference>
<dbReference type="GO" id="GO:0006635">
    <property type="term" value="P:fatty acid beta-oxidation"/>
    <property type="evidence" value="ECO:0000318"/>
    <property type="project" value="GO_Central"/>
</dbReference>
<dbReference type="GO" id="GO:0010124">
    <property type="term" value="P:phenylacetate catabolic process"/>
    <property type="evidence" value="ECO:0000318"/>
    <property type="project" value="GO_Central"/>
</dbReference>
<dbReference type="CDD" id="cd00751">
    <property type="entry name" value="thiolase"/>
    <property type="match status" value="1"/>
</dbReference>
<dbReference type="FunFam" id="3.40.47.10:FF:000010">
    <property type="entry name" value="Acetyl-CoA acetyltransferase (Thiolase)"/>
    <property type="match status" value="1"/>
</dbReference>
<dbReference type="Gene3D" id="3.40.47.10">
    <property type="match status" value="1"/>
</dbReference>
<dbReference type="InterPro" id="IPR002155">
    <property type="entry name" value="Thiolase"/>
</dbReference>
<dbReference type="InterPro" id="IPR016039">
    <property type="entry name" value="Thiolase-like"/>
</dbReference>
<dbReference type="InterPro" id="IPR050215">
    <property type="entry name" value="Thiolase-like_sf_Thiolase"/>
</dbReference>
<dbReference type="InterPro" id="IPR020615">
    <property type="entry name" value="Thiolase_acyl_enz_int_AS"/>
</dbReference>
<dbReference type="InterPro" id="IPR020610">
    <property type="entry name" value="Thiolase_AS"/>
</dbReference>
<dbReference type="InterPro" id="IPR020617">
    <property type="entry name" value="Thiolase_C"/>
</dbReference>
<dbReference type="InterPro" id="IPR020613">
    <property type="entry name" value="Thiolase_CS"/>
</dbReference>
<dbReference type="InterPro" id="IPR020616">
    <property type="entry name" value="Thiolase_N"/>
</dbReference>
<dbReference type="NCBIfam" id="TIGR01930">
    <property type="entry name" value="AcCoA-C-Actrans"/>
    <property type="match status" value="1"/>
</dbReference>
<dbReference type="NCBIfam" id="NF005805">
    <property type="entry name" value="PRK07661.1"/>
    <property type="match status" value="1"/>
</dbReference>
<dbReference type="PANTHER" id="PTHR43853">
    <property type="entry name" value="3-KETOACYL-COA THIOLASE, PEROXISOMAL"/>
    <property type="match status" value="1"/>
</dbReference>
<dbReference type="PANTHER" id="PTHR43853:SF21">
    <property type="entry name" value="STEROID 3-KETOACYL-COA THIOLASE"/>
    <property type="match status" value="1"/>
</dbReference>
<dbReference type="Pfam" id="PF02803">
    <property type="entry name" value="Thiolase_C"/>
    <property type="match status" value="1"/>
</dbReference>
<dbReference type="Pfam" id="PF00108">
    <property type="entry name" value="Thiolase_N"/>
    <property type="match status" value="1"/>
</dbReference>
<dbReference type="PIRSF" id="PIRSF000429">
    <property type="entry name" value="Ac-CoA_Ac_transf"/>
    <property type="match status" value="1"/>
</dbReference>
<dbReference type="SUPFAM" id="SSF53901">
    <property type="entry name" value="Thiolase-like"/>
    <property type="match status" value="2"/>
</dbReference>
<dbReference type="PROSITE" id="PS00098">
    <property type="entry name" value="THIOLASE_1"/>
    <property type="match status" value="1"/>
</dbReference>
<dbReference type="PROSITE" id="PS00737">
    <property type="entry name" value="THIOLASE_2"/>
    <property type="match status" value="1"/>
</dbReference>
<dbReference type="PROSITE" id="PS00099">
    <property type="entry name" value="THIOLASE_3"/>
    <property type="match status" value="1"/>
</dbReference>
<comment type="function">
    <text>Involved in the degradation of long-chain fatty acids.</text>
</comment>
<comment type="catalytic activity">
    <reaction>
        <text>an acyl-CoA + acetyl-CoA = a 3-oxoacyl-CoA + CoA</text>
        <dbReference type="Rhea" id="RHEA:21564"/>
        <dbReference type="ChEBI" id="CHEBI:57287"/>
        <dbReference type="ChEBI" id="CHEBI:57288"/>
        <dbReference type="ChEBI" id="CHEBI:58342"/>
        <dbReference type="ChEBI" id="CHEBI:90726"/>
        <dbReference type="EC" id="2.3.1.16"/>
    </reaction>
</comment>
<comment type="pathway">
    <text>Lipid metabolism; fatty acid beta-oxidation.</text>
</comment>
<comment type="induction">
    <text evidence="3">Repressed by FadR in the absence of LCFAs (fatty acids of 14-20 carbon atoms). When LCFAs are present in the medium, they are converted to long-chain acyl-CoAs, which antagonize FadR as to its binding to fadR boxes on target DNA and thus derepress transcription.</text>
</comment>
<comment type="similarity">
    <text evidence="4">Belongs to the thiolase-like superfamily. Thiolase family.</text>
</comment>
<feature type="chain" id="PRO_0000360669" description="3-ketoacyl-CoA thiolase">
    <location>
        <begin position="1"/>
        <end position="391"/>
    </location>
</feature>
<feature type="active site" description="Acyl-thioester intermediate" evidence="1">
    <location>
        <position position="90"/>
    </location>
</feature>
<feature type="active site" description="Proton acceptor" evidence="2">
    <location>
        <position position="347"/>
    </location>
</feature>
<feature type="active site" description="Proton acceptor" evidence="2">
    <location>
        <position position="377"/>
    </location>
</feature>
<accession>O32177</accession>
<protein>
    <recommendedName>
        <fullName>3-ketoacyl-CoA thiolase</fullName>
        <ecNumber>2.3.1.16</ecNumber>
    </recommendedName>
    <alternativeName>
        <fullName>Acetyl-CoA acyltransferase</fullName>
    </alternativeName>
    <alternativeName>
        <fullName>Beta-ketothiolase</fullName>
    </alternativeName>
</protein>
<organism>
    <name type="scientific">Bacillus subtilis (strain 168)</name>
    <dbReference type="NCBI Taxonomy" id="224308"/>
    <lineage>
        <taxon>Bacteria</taxon>
        <taxon>Bacillati</taxon>
        <taxon>Bacillota</taxon>
        <taxon>Bacilli</taxon>
        <taxon>Bacillales</taxon>
        <taxon>Bacillaceae</taxon>
        <taxon>Bacillus</taxon>
    </lineage>
</organism>
<proteinExistence type="evidence at transcript level"/>